<reference key="1">
    <citation type="journal article" date="2009" name="Nature">
        <title>Evolution of pathogenicity and sexual reproduction in eight Candida genomes.</title>
        <authorList>
            <person name="Butler G."/>
            <person name="Rasmussen M.D."/>
            <person name="Lin M.F."/>
            <person name="Santos M.A.S."/>
            <person name="Sakthikumar S."/>
            <person name="Munro C.A."/>
            <person name="Rheinbay E."/>
            <person name="Grabherr M."/>
            <person name="Forche A."/>
            <person name="Reedy J.L."/>
            <person name="Agrafioti I."/>
            <person name="Arnaud M.B."/>
            <person name="Bates S."/>
            <person name="Brown A.J.P."/>
            <person name="Brunke S."/>
            <person name="Costanzo M.C."/>
            <person name="Fitzpatrick D.A."/>
            <person name="de Groot P.W.J."/>
            <person name="Harris D."/>
            <person name="Hoyer L.L."/>
            <person name="Hube B."/>
            <person name="Klis F.M."/>
            <person name="Kodira C."/>
            <person name="Lennard N."/>
            <person name="Logue M.E."/>
            <person name="Martin R."/>
            <person name="Neiman A.M."/>
            <person name="Nikolaou E."/>
            <person name="Quail M.A."/>
            <person name="Quinn J."/>
            <person name="Santos M.C."/>
            <person name="Schmitzberger F.F."/>
            <person name="Sherlock G."/>
            <person name="Shah P."/>
            <person name="Silverstein K.A.T."/>
            <person name="Skrzypek M.S."/>
            <person name="Soll D."/>
            <person name="Staggs R."/>
            <person name="Stansfield I."/>
            <person name="Stumpf M.P.H."/>
            <person name="Sudbery P.E."/>
            <person name="Srikantha T."/>
            <person name="Zeng Q."/>
            <person name="Berman J."/>
            <person name="Berriman M."/>
            <person name="Heitman J."/>
            <person name="Gow N.A.R."/>
            <person name="Lorenz M.C."/>
            <person name="Birren B.W."/>
            <person name="Kellis M."/>
            <person name="Cuomo C.A."/>
        </authorList>
    </citation>
    <scope>NUCLEOTIDE SEQUENCE [LARGE SCALE GENOMIC DNA]</scope>
    <source>
        <strain>ATCC 6260 / CBS 566 / DSM 6381 / JCM 1539 / NBRC 10279 / NRRL Y-324</strain>
    </source>
</reference>
<comment type="function">
    <text evidence="1">ATP-dependent RNA helicase involved in 40S ribosomal subunit biogenesis. Required for the processing and cleavage of 35S pre-rRNA at sites A0, A1, and A2, leading to mature 18S rRNA (By similarity).</text>
</comment>
<comment type="catalytic activity">
    <reaction>
        <text>ATP + H2O = ADP + phosphate + H(+)</text>
        <dbReference type="Rhea" id="RHEA:13065"/>
        <dbReference type="ChEBI" id="CHEBI:15377"/>
        <dbReference type="ChEBI" id="CHEBI:15378"/>
        <dbReference type="ChEBI" id="CHEBI:30616"/>
        <dbReference type="ChEBI" id="CHEBI:43474"/>
        <dbReference type="ChEBI" id="CHEBI:456216"/>
        <dbReference type="EC" id="3.6.4.13"/>
    </reaction>
</comment>
<comment type="subcellular location">
    <subcellularLocation>
        <location evidence="1">Nucleus</location>
        <location evidence="1">Nucleolus</location>
    </subcellularLocation>
</comment>
<comment type="domain">
    <text>The Q motif is unique to and characteristic of the DEAD box family of RNA helicases and controls ATP binding and hydrolysis.</text>
</comment>
<comment type="similarity">
    <text evidence="4">Belongs to the DEAD box helicase family. DDX48/FAL1 subfamily.</text>
</comment>
<dbReference type="EC" id="3.6.4.13"/>
<dbReference type="EMBL" id="CH408156">
    <property type="protein sequence ID" value="EDK37471.2"/>
    <property type="molecule type" value="Genomic_DNA"/>
</dbReference>
<dbReference type="RefSeq" id="XP_001485898.1">
    <property type="nucleotide sequence ID" value="XM_001485848.1"/>
</dbReference>
<dbReference type="SMR" id="A5DE68"/>
<dbReference type="FunCoup" id="A5DE68">
    <property type="interactions" value="665"/>
</dbReference>
<dbReference type="STRING" id="294746.A5DE68"/>
<dbReference type="GeneID" id="5128302"/>
<dbReference type="KEGG" id="pgu:PGUG_01569"/>
<dbReference type="VEuPathDB" id="FungiDB:PGUG_01569"/>
<dbReference type="eggNOG" id="KOG0328">
    <property type="taxonomic scope" value="Eukaryota"/>
</dbReference>
<dbReference type="HOGENOM" id="CLU_003041_1_0_1"/>
<dbReference type="InParanoid" id="A5DE68"/>
<dbReference type="OMA" id="DTIHGDK"/>
<dbReference type="OrthoDB" id="10265785at2759"/>
<dbReference type="Proteomes" id="UP000001997">
    <property type="component" value="Unassembled WGS sequence"/>
</dbReference>
<dbReference type="GO" id="GO:0097078">
    <property type="term" value="C:FAL1-SGD1 complex"/>
    <property type="evidence" value="ECO:0007669"/>
    <property type="project" value="EnsemblFungi"/>
</dbReference>
<dbReference type="GO" id="GO:0005730">
    <property type="term" value="C:nucleolus"/>
    <property type="evidence" value="ECO:0007669"/>
    <property type="project" value="UniProtKB-SubCell"/>
</dbReference>
<dbReference type="GO" id="GO:0030688">
    <property type="term" value="C:preribosome, small subunit precursor"/>
    <property type="evidence" value="ECO:0007669"/>
    <property type="project" value="EnsemblFungi"/>
</dbReference>
<dbReference type="GO" id="GO:0032040">
    <property type="term" value="C:small-subunit processome"/>
    <property type="evidence" value="ECO:0007669"/>
    <property type="project" value="EnsemblFungi"/>
</dbReference>
<dbReference type="GO" id="GO:0005524">
    <property type="term" value="F:ATP binding"/>
    <property type="evidence" value="ECO:0007669"/>
    <property type="project" value="UniProtKB-KW"/>
</dbReference>
<dbReference type="GO" id="GO:0016887">
    <property type="term" value="F:ATP hydrolysis activity"/>
    <property type="evidence" value="ECO:0007669"/>
    <property type="project" value="RHEA"/>
</dbReference>
<dbReference type="GO" id="GO:0003723">
    <property type="term" value="F:RNA binding"/>
    <property type="evidence" value="ECO:0007669"/>
    <property type="project" value="UniProtKB-KW"/>
</dbReference>
<dbReference type="GO" id="GO:0003724">
    <property type="term" value="F:RNA helicase activity"/>
    <property type="evidence" value="ECO:0007669"/>
    <property type="project" value="UniProtKB-EC"/>
</dbReference>
<dbReference type="GO" id="GO:0000462">
    <property type="term" value="P:maturation of SSU-rRNA from tricistronic rRNA transcript (SSU-rRNA, 5.8S rRNA, LSU-rRNA)"/>
    <property type="evidence" value="ECO:0007669"/>
    <property type="project" value="EnsemblFungi"/>
</dbReference>
<dbReference type="CDD" id="cd18787">
    <property type="entry name" value="SF2_C_DEAD"/>
    <property type="match status" value="1"/>
</dbReference>
<dbReference type="FunFam" id="3.40.50.300:FF:000849">
    <property type="entry name" value="ATP-dependent RNA helicase DBP5"/>
    <property type="match status" value="1"/>
</dbReference>
<dbReference type="FunFam" id="3.40.50.300:FF:000031">
    <property type="entry name" value="Eukaryotic initiation factor 4A-III"/>
    <property type="match status" value="1"/>
</dbReference>
<dbReference type="Gene3D" id="3.40.50.300">
    <property type="entry name" value="P-loop containing nucleotide triphosphate hydrolases"/>
    <property type="match status" value="2"/>
</dbReference>
<dbReference type="InterPro" id="IPR011545">
    <property type="entry name" value="DEAD/DEAH_box_helicase_dom"/>
</dbReference>
<dbReference type="InterPro" id="IPR014001">
    <property type="entry name" value="Helicase_ATP-bd"/>
</dbReference>
<dbReference type="InterPro" id="IPR001650">
    <property type="entry name" value="Helicase_C-like"/>
</dbReference>
<dbReference type="InterPro" id="IPR027417">
    <property type="entry name" value="P-loop_NTPase"/>
</dbReference>
<dbReference type="InterPro" id="IPR000629">
    <property type="entry name" value="RNA-helicase_DEAD-box_CS"/>
</dbReference>
<dbReference type="InterPro" id="IPR014014">
    <property type="entry name" value="RNA_helicase_DEAD_Q_motif"/>
</dbReference>
<dbReference type="PANTHER" id="PTHR47958">
    <property type="entry name" value="ATP-DEPENDENT RNA HELICASE DBP3"/>
    <property type="match status" value="1"/>
</dbReference>
<dbReference type="Pfam" id="PF00270">
    <property type="entry name" value="DEAD"/>
    <property type="match status" value="1"/>
</dbReference>
<dbReference type="Pfam" id="PF00271">
    <property type="entry name" value="Helicase_C"/>
    <property type="match status" value="1"/>
</dbReference>
<dbReference type="SMART" id="SM00487">
    <property type="entry name" value="DEXDc"/>
    <property type="match status" value="1"/>
</dbReference>
<dbReference type="SMART" id="SM00490">
    <property type="entry name" value="HELICc"/>
    <property type="match status" value="1"/>
</dbReference>
<dbReference type="SUPFAM" id="SSF52540">
    <property type="entry name" value="P-loop containing nucleoside triphosphate hydrolases"/>
    <property type="match status" value="2"/>
</dbReference>
<dbReference type="PROSITE" id="PS00039">
    <property type="entry name" value="DEAD_ATP_HELICASE"/>
    <property type="match status" value="1"/>
</dbReference>
<dbReference type="PROSITE" id="PS51192">
    <property type="entry name" value="HELICASE_ATP_BIND_1"/>
    <property type="match status" value="1"/>
</dbReference>
<dbReference type="PROSITE" id="PS51194">
    <property type="entry name" value="HELICASE_CTER"/>
    <property type="match status" value="1"/>
</dbReference>
<dbReference type="PROSITE" id="PS51195">
    <property type="entry name" value="Q_MOTIF"/>
    <property type="match status" value="1"/>
</dbReference>
<organism>
    <name type="scientific">Meyerozyma guilliermondii (strain ATCC 6260 / CBS 566 / DSM 6381 / JCM 1539 / NBRC 10279 / NRRL Y-324)</name>
    <name type="common">Yeast</name>
    <name type="synonym">Candida guilliermondii</name>
    <dbReference type="NCBI Taxonomy" id="294746"/>
    <lineage>
        <taxon>Eukaryota</taxon>
        <taxon>Fungi</taxon>
        <taxon>Dikarya</taxon>
        <taxon>Ascomycota</taxon>
        <taxon>Saccharomycotina</taxon>
        <taxon>Pichiomycetes</taxon>
        <taxon>Debaryomycetaceae</taxon>
        <taxon>Meyerozyma</taxon>
    </lineage>
</organism>
<evidence type="ECO:0000250" key="1"/>
<evidence type="ECO:0000255" key="2">
    <source>
        <dbReference type="PROSITE-ProRule" id="PRU00541"/>
    </source>
</evidence>
<evidence type="ECO:0000255" key="3">
    <source>
        <dbReference type="PROSITE-ProRule" id="PRU00542"/>
    </source>
</evidence>
<evidence type="ECO:0000305" key="4"/>
<sequence length="397" mass="44990">MDFDRELDEELEFTKSTKKVKIYPTFESMNLKPELLKGIYNYGFEAPSAIQSRAIMQIIRGRDTIAQAQSGTGKTATFSIGILSSIDTKSKDCQALVLSPTRELAQQIENVIEHLGDYMNVRSHACIGGTQVGEDVKKLQQGQHIISGTPGRVLDMIKRRNIMPRHVKMLVLDEADELLTKGFKEQIYEIYKTLPAGAQVVVVSATLTPEVLEMTNKFTSDPVKILVKRDDVTLKGIKQYYIQCEKEDWKFDTLCDLYDNLTITQAVIFCNTKAKVNWLAGQMRKSNFTVAAMHGDMKQEDRDSIMKEFRSGSTRVLISTDVWARGIDVQQVSLVINYDLPLDKENYVHRIGRSGRFGRKGTAINLLTSQDKDELKSLQHYYSTKIREVPADLSKIM</sequence>
<accession>A5DE68</accession>
<feature type="chain" id="PRO_0000294610" description="ATP-dependent RNA helicase FAL1">
    <location>
        <begin position="1"/>
        <end position="397"/>
    </location>
</feature>
<feature type="domain" description="Helicase ATP-binding" evidence="2">
    <location>
        <begin position="55"/>
        <end position="225"/>
    </location>
</feature>
<feature type="domain" description="Helicase C-terminal" evidence="3">
    <location>
        <begin position="236"/>
        <end position="397"/>
    </location>
</feature>
<feature type="short sequence motif" description="Q motif">
    <location>
        <begin position="24"/>
        <end position="52"/>
    </location>
</feature>
<feature type="short sequence motif" description="DEAD box">
    <location>
        <begin position="173"/>
        <end position="176"/>
    </location>
</feature>
<feature type="binding site" evidence="2">
    <location>
        <begin position="68"/>
        <end position="75"/>
    </location>
    <ligand>
        <name>ATP</name>
        <dbReference type="ChEBI" id="CHEBI:30616"/>
    </ligand>
</feature>
<gene>
    <name type="primary">FAL1</name>
    <name type="ORF">PGUG_01569</name>
</gene>
<proteinExistence type="inferred from homology"/>
<keyword id="KW-0067">ATP-binding</keyword>
<keyword id="KW-0347">Helicase</keyword>
<keyword id="KW-0378">Hydrolase</keyword>
<keyword id="KW-0547">Nucleotide-binding</keyword>
<keyword id="KW-0539">Nucleus</keyword>
<keyword id="KW-1185">Reference proteome</keyword>
<keyword id="KW-0690">Ribosome biogenesis</keyword>
<keyword id="KW-0694">RNA-binding</keyword>
<keyword id="KW-0698">rRNA processing</keyword>
<name>FAL1_PICGU</name>
<protein>
    <recommendedName>
        <fullName>ATP-dependent RNA helicase FAL1</fullName>
        <ecNumber>3.6.4.13</ecNumber>
    </recommendedName>
</protein>